<sequence>MDGFSALFVPSEPSVPGSQSVVPTCTGAFVSGKTQAQTPIPGPPPTLPSSSSVEDNSRRPAAGPFYLLRELPGLSDLTASINLILHYNLEHSFSKFCGKKVKEKLSNFLPDLPGMIDTPGTPDNSSLRSLIEKPPICGNAFTPLTGALLTGFRLHTGPLPEQCRLMHIQPPKKKNKKHKQSRTQEPAPPETPSDSDHRKKKKKQREDDPERRKKKKDKKKKKSRHSPEHPGAGSSQSGLR</sequence>
<proteinExistence type="evidence at transcript level"/>
<evidence type="ECO:0000250" key="1"/>
<evidence type="ECO:0000256" key="2">
    <source>
        <dbReference type="SAM" id="MobiDB-lite"/>
    </source>
</evidence>
<evidence type="ECO:0000305" key="3"/>
<dbReference type="EMBL" id="BC042241">
    <property type="protein sequence ID" value="AAH42241.1"/>
    <property type="molecule type" value="mRNA"/>
</dbReference>
<dbReference type="EMBL" id="BC090202">
    <property type="protein sequence ID" value="AAH90202.1"/>
    <property type="molecule type" value="mRNA"/>
</dbReference>
<dbReference type="RefSeq" id="NP_001167490.1">
    <property type="nucleotide sequence ID" value="NM_001174019.1"/>
</dbReference>
<dbReference type="SMR" id="Q5EAY2"/>
<dbReference type="DNASU" id="100381081"/>
<dbReference type="GeneID" id="100381081"/>
<dbReference type="KEGG" id="xla:100381081"/>
<dbReference type="CTD" id="100381081"/>
<dbReference type="OrthoDB" id="10044050at2759"/>
<dbReference type="Proteomes" id="UP000186698">
    <property type="component" value="Chromosome 7L"/>
</dbReference>
<dbReference type="Bgee" id="100381081">
    <property type="expression patterns" value="Expressed in egg cell and 19 other cell types or tissues"/>
</dbReference>
<dbReference type="GO" id="GO:0016592">
    <property type="term" value="C:mediator complex"/>
    <property type="evidence" value="ECO:0000318"/>
    <property type="project" value="GO_Central"/>
</dbReference>
<dbReference type="GO" id="GO:0003712">
    <property type="term" value="F:transcription coregulator activity"/>
    <property type="evidence" value="ECO:0007669"/>
    <property type="project" value="InterPro"/>
</dbReference>
<dbReference type="GO" id="GO:0045944">
    <property type="term" value="P:positive regulation of transcription by RNA polymerase II"/>
    <property type="evidence" value="ECO:0000318"/>
    <property type="project" value="GO_Central"/>
</dbReference>
<dbReference type="InterPro" id="IPR019403">
    <property type="entry name" value="Mediator_Med19_met"/>
</dbReference>
<dbReference type="PANTHER" id="PTHR22536">
    <property type="entry name" value="LUNG CANCER METASTASIS-RELATED LCMR1 PROTEIN"/>
    <property type="match status" value="1"/>
</dbReference>
<dbReference type="PANTHER" id="PTHR22536:SF1">
    <property type="entry name" value="MEDIATOR OF RNA POLYMERASE II TRANSCRIPTION SUBUNIT 19"/>
    <property type="match status" value="1"/>
</dbReference>
<dbReference type="Pfam" id="PF10278">
    <property type="entry name" value="Med19"/>
    <property type="match status" value="1"/>
</dbReference>
<accession>Q5EAY2</accession>
<accession>Q8AVJ5</accession>
<gene>
    <name type="primary">med19</name>
</gene>
<reference key="1">
    <citation type="submission" date="2005-02" db="EMBL/GenBank/DDBJ databases">
        <authorList>
            <consortium name="NIH - Xenopus Gene Collection (XGC) project"/>
        </authorList>
    </citation>
    <scope>NUCLEOTIDE SEQUENCE [LARGE SCALE MRNA]</scope>
    <source>
        <tissue>Egg</tissue>
        <tissue>Embryo</tissue>
    </source>
</reference>
<keyword id="KW-0010">Activator</keyword>
<keyword id="KW-0539">Nucleus</keyword>
<keyword id="KW-1185">Reference proteome</keyword>
<keyword id="KW-0804">Transcription</keyword>
<keyword id="KW-0805">Transcription regulation</keyword>
<name>MED19_XENLA</name>
<organism>
    <name type="scientific">Xenopus laevis</name>
    <name type="common">African clawed frog</name>
    <dbReference type="NCBI Taxonomy" id="8355"/>
    <lineage>
        <taxon>Eukaryota</taxon>
        <taxon>Metazoa</taxon>
        <taxon>Chordata</taxon>
        <taxon>Craniata</taxon>
        <taxon>Vertebrata</taxon>
        <taxon>Euteleostomi</taxon>
        <taxon>Amphibia</taxon>
        <taxon>Batrachia</taxon>
        <taxon>Anura</taxon>
        <taxon>Pipoidea</taxon>
        <taxon>Pipidae</taxon>
        <taxon>Xenopodinae</taxon>
        <taxon>Xenopus</taxon>
        <taxon>Xenopus</taxon>
    </lineage>
</organism>
<protein>
    <recommendedName>
        <fullName>Mediator of RNA polymerase II transcription subunit 19</fullName>
    </recommendedName>
    <alternativeName>
        <fullName>Mediator complex subunit 19</fullName>
    </alternativeName>
</protein>
<comment type="function">
    <text evidence="1">Component of the Mediator complex, a coactivator involved in the regulated transcription of nearly all RNA polymerase II-dependent genes. Mediator functions as a bridge to convey information from gene-specific regulatory proteins to the basal RNA polymerase II transcription machinery. Mediator is recruited to promoters by direct interactions with regulatory proteins and serves as a scaffold for the assembly of a functional preinitiation complex with RNA polymerase II and the general transcription factors (By similarity).</text>
</comment>
<comment type="subunit">
    <text evidence="1">Component of the Mediator complex.</text>
</comment>
<comment type="subcellular location">
    <subcellularLocation>
        <location evidence="3">Nucleus</location>
    </subcellularLocation>
</comment>
<comment type="similarity">
    <text evidence="3">Belongs to the Mediator complex subunit 19 family.</text>
</comment>
<feature type="chain" id="PRO_0000304770" description="Mediator of RNA polymerase II transcription subunit 19">
    <location>
        <begin position="1"/>
        <end position="240"/>
    </location>
</feature>
<feature type="region of interest" description="Disordered" evidence="2">
    <location>
        <begin position="32"/>
        <end position="58"/>
    </location>
</feature>
<feature type="region of interest" description="Disordered" evidence="2">
    <location>
        <begin position="169"/>
        <end position="240"/>
    </location>
</feature>
<feature type="compositionally biased region" description="Basic residues" evidence="2">
    <location>
        <begin position="170"/>
        <end position="181"/>
    </location>
</feature>
<feature type="compositionally biased region" description="Basic residues" evidence="2">
    <location>
        <begin position="212"/>
        <end position="224"/>
    </location>
</feature>
<feature type="sequence conflict" description="In Ref. 1; AAH42241." evidence="3" ref="1">
    <original>QR</original>
    <variation>KK</variation>
    <location>
        <begin position="204"/>
        <end position="205"/>
    </location>
</feature>